<proteinExistence type="inferred from homology"/>
<organism>
    <name type="scientific">Burkholderia lata (strain ATCC 17760 / DSM 23089 / LMG 22485 / NCIMB 9086 / R18194 / 383)</name>
    <dbReference type="NCBI Taxonomy" id="482957"/>
    <lineage>
        <taxon>Bacteria</taxon>
        <taxon>Pseudomonadati</taxon>
        <taxon>Pseudomonadota</taxon>
        <taxon>Betaproteobacteria</taxon>
        <taxon>Burkholderiales</taxon>
        <taxon>Burkholderiaceae</taxon>
        <taxon>Burkholderia</taxon>
        <taxon>Burkholderia cepacia complex</taxon>
    </lineage>
</organism>
<keyword id="KW-0687">Ribonucleoprotein</keyword>
<keyword id="KW-0689">Ribosomal protein</keyword>
<keyword id="KW-0694">RNA-binding</keyword>
<keyword id="KW-0699">rRNA-binding</keyword>
<feature type="chain" id="PRO_0000234837" description="Large ribosomal subunit protein uL10">
    <location>
        <begin position="1"/>
        <end position="165"/>
    </location>
</feature>
<evidence type="ECO:0000255" key="1">
    <source>
        <dbReference type="HAMAP-Rule" id="MF_00362"/>
    </source>
</evidence>
<evidence type="ECO:0000305" key="2"/>
<protein>
    <recommendedName>
        <fullName evidence="1">Large ribosomal subunit protein uL10</fullName>
    </recommendedName>
    <alternativeName>
        <fullName evidence="2">50S ribosomal protein L10</fullName>
    </alternativeName>
</protein>
<sequence length="165" mass="17655">MPLNREDKQAVVAEVSAQVAKAQTVVLAEYRGIAVGDLTKLRAQAREQQVYLRVLKNTLARRAVEGTPFAPLAEQMTGPLIYGISEDAIAAAKVVNDFSKSNDKLVIKAGSFDGKVMDKAGVQALASIPSREELLSKLLFVMQSPVSSFARALAALAEKKQAEAA</sequence>
<comment type="function">
    <text evidence="1">Forms part of the ribosomal stalk, playing a central role in the interaction of the ribosome with GTP-bound translation factors.</text>
</comment>
<comment type="subunit">
    <text evidence="1">Part of the ribosomal stalk of the 50S ribosomal subunit. The N-terminus interacts with L11 and the large rRNA to form the base of the stalk. The C-terminus forms an elongated spine to which L12 dimers bind in a sequential fashion forming a multimeric L10(L12)X complex.</text>
</comment>
<comment type="similarity">
    <text evidence="1">Belongs to the universal ribosomal protein uL10 family.</text>
</comment>
<comment type="sequence caution" evidence="2">
    <conflict type="erroneous initiation">
        <sequence resource="EMBL-CDS" id="ABB07039"/>
    </conflict>
</comment>
<reference key="1">
    <citation type="submission" date="2005-10" db="EMBL/GenBank/DDBJ databases">
        <title>Complete sequence of chromosome 1 of Burkholderia sp. 383.</title>
        <authorList>
            <consortium name="US DOE Joint Genome Institute"/>
            <person name="Copeland A."/>
            <person name="Lucas S."/>
            <person name="Lapidus A."/>
            <person name="Barry K."/>
            <person name="Detter J.C."/>
            <person name="Glavina T."/>
            <person name="Hammon N."/>
            <person name="Israni S."/>
            <person name="Pitluck S."/>
            <person name="Chain P."/>
            <person name="Malfatti S."/>
            <person name="Shin M."/>
            <person name="Vergez L."/>
            <person name="Schmutz J."/>
            <person name="Larimer F."/>
            <person name="Land M."/>
            <person name="Kyrpides N."/>
            <person name="Lykidis A."/>
            <person name="Richardson P."/>
        </authorList>
    </citation>
    <scope>NUCLEOTIDE SEQUENCE [LARGE SCALE GENOMIC DNA]</scope>
    <source>
        <strain>ATCC 17760 / DSM 23089 / LMG 22485 / NCIMB 9086 / R18194 / 383</strain>
    </source>
</reference>
<name>RL10_BURL3</name>
<gene>
    <name evidence="1" type="primary">rplJ</name>
    <name type="ordered locus">Bcep18194_A3437</name>
</gene>
<dbReference type="EMBL" id="CP000151">
    <property type="protein sequence ID" value="ABB07039.1"/>
    <property type="status" value="ALT_INIT"/>
    <property type="molecule type" value="Genomic_DNA"/>
</dbReference>
<dbReference type="RefSeq" id="WP_011350668.1">
    <property type="nucleotide sequence ID" value="NC_007510.1"/>
</dbReference>
<dbReference type="SMR" id="Q39KH7"/>
<dbReference type="GeneID" id="45093354"/>
<dbReference type="KEGG" id="bur:Bcep18194_A3437"/>
<dbReference type="PATRIC" id="fig|482957.22.peg.277"/>
<dbReference type="HOGENOM" id="CLU_092227_0_1_4"/>
<dbReference type="Proteomes" id="UP000002705">
    <property type="component" value="Chromosome 1"/>
</dbReference>
<dbReference type="GO" id="GO:1990904">
    <property type="term" value="C:ribonucleoprotein complex"/>
    <property type="evidence" value="ECO:0007669"/>
    <property type="project" value="UniProtKB-KW"/>
</dbReference>
<dbReference type="GO" id="GO:0005840">
    <property type="term" value="C:ribosome"/>
    <property type="evidence" value="ECO:0007669"/>
    <property type="project" value="UniProtKB-KW"/>
</dbReference>
<dbReference type="GO" id="GO:0070180">
    <property type="term" value="F:large ribosomal subunit rRNA binding"/>
    <property type="evidence" value="ECO:0007669"/>
    <property type="project" value="UniProtKB-UniRule"/>
</dbReference>
<dbReference type="GO" id="GO:0006412">
    <property type="term" value="P:translation"/>
    <property type="evidence" value="ECO:0007669"/>
    <property type="project" value="UniProtKB-UniRule"/>
</dbReference>
<dbReference type="CDD" id="cd05797">
    <property type="entry name" value="Ribosomal_L10"/>
    <property type="match status" value="1"/>
</dbReference>
<dbReference type="Gene3D" id="3.30.70.1730">
    <property type="match status" value="1"/>
</dbReference>
<dbReference type="Gene3D" id="6.10.250.290">
    <property type="match status" value="1"/>
</dbReference>
<dbReference type="HAMAP" id="MF_00362">
    <property type="entry name" value="Ribosomal_uL10"/>
    <property type="match status" value="1"/>
</dbReference>
<dbReference type="InterPro" id="IPR001790">
    <property type="entry name" value="Ribosomal_uL10"/>
</dbReference>
<dbReference type="InterPro" id="IPR043141">
    <property type="entry name" value="Ribosomal_uL10-like_sf"/>
</dbReference>
<dbReference type="InterPro" id="IPR022973">
    <property type="entry name" value="Ribosomal_uL10_bac"/>
</dbReference>
<dbReference type="InterPro" id="IPR047865">
    <property type="entry name" value="Ribosomal_uL10_bac_type"/>
</dbReference>
<dbReference type="NCBIfam" id="NF000955">
    <property type="entry name" value="PRK00099.1-1"/>
    <property type="match status" value="1"/>
</dbReference>
<dbReference type="PANTHER" id="PTHR11560">
    <property type="entry name" value="39S RIBOSOMAL PROTEIN L10, MITOCHONDRIAL"/>
    <property type="match status" value="1"/>
</dbReference>
<dbReference type="Pfam" id="PF00466">
    <property type="entry name" value="Ribosomal_L10"/>
    <property type="match status" value="1"/>
</dbReference>
<dbReference type="SUPFAM" id="SSF160369">
    <property type="entry name" value="Ribosomal protein L10-like"/>
    <property type="match status" value="1"/>
</dbReference>
<accession>Q39KH7</accession>